<name>AROC_METAC</name>
<accession>Q8TT87</accession>
<keyword id="KW-0028">Amino-acid biosynthesis</keyword>
<keyword id="KW-0057">Aromatic amino acid biosynthesis</keyword>
<keyword id="KW-0274">FAD</keyword>
<keyword id="KW-0285">Flavoprotein</keyword>
<keyword id="KW-0288">FMN</keyword>
<keyword id="KW-0456">Lyase</keyword>
<keyword id="KW-0521">NADP</keyword>
<keyword id="KW-1185">Reference proteome</keyword>
<gene>
    <name evidence="1" type="primary">aroC</name>
    <name type="ordered locus">MA_0550</name>
</gene>
<dbReference type="EC" id="4.2.3.5" evidence="1"/>
<dbReference type="EMBL" id="AE010299">
    <property type="protein sequence ID" value="AAM03994.1"/>
    <property type="molecule type" value="Genomic_DNA"/>
</dbReference>
<dbReference type="RefSeq" id="WP_011020599.1">
    <property type="nucleotide sequence ID" value="NC_003552.1"/>
</dbReference>
<dbReference type="SMR" id="Q8TT87"/>
<dbReference type="FunCoup" id="Q8TT87">
    <property type="interactions" value="154"/>
</dbReference>
<dbReference type="STRING" id="188937.MA_0550"/>
<dbReference type="EnsemblBacteria" id="AAM03994">
    <property type="protein sequence ID" value="AAM03994"/>
    <property type="gene ID" value="MA_0550"/>
</dbReference>
<dbReference type="GeneID" id="1472442"/>
<dbReference type="KEGG" id="mac:MA_0550"/>
<dbReference type="HOGENOM" id="CLU_034547_0_2_2"/>
<dbReference type="InParanoid" id="Q8TT87"/>
<dbReference type="OrthoDB" id="33049at2157"/>
<dbReference type="PhylomeDB" id="Q8TT87"/>
<dbReference type="UniPathway" id="UPA00053">
    <property type="reaction ID" value="UER00090"/>
</dbReference>
<dbReference type="Proteomes" id="UP000002487">
    <property type="component" value="Chromosome"/>
</dbReference>
<dbReference type="GO" id="GO:0005829">
    <property type="term" value="C:cytosol"/>
    <property type="evidence" value="ECO:0000318"/>
    <property type="project" value="GO_Central"/>
</dbReference>
<dbReference type="GO" id="GO:0004107">
    <property type="term" value="F:chorismate synthase activity"/>
    <property type="evidence" value="ECO:0000318"/>
    <property type="project" value="GO_Central"/>
</dbReference>
<dbReference type="GO" id="GO:0010181">
    <property type="term" value="F:FMN binding"/>
    <property type="evidence" value="ECO:0000318"/>
    <property type="project" value="GO_Central"/>
</dbReference>
<dbReference type="GO" id="GO:0008652">
    <property type="term" value="P:amino acid biosynthetic process"/>
    <property type="evidence" value="ECO:0007669"/>
    <property type="project" value="UniProtKB-KW"/>
</dbReference>
<dbReference type="GO" id="GO:0009073">
    <property type="term" value="P:aromatic amino acid family biosynthetic process"/>
    <property type="evidence" value="ECO:0000318"/>
    <property type="project" value="GO_Central"/>
</dbReference>
<dbReference type="GO" id="GO:0009423">
    <property type="term" value="P:chorismate biosynthetic process"/>
    <property type="evidence" value="ECO:0000318"/>
    <property type="project" value="GO_Central"/>
</dbReference>
<dbReference type="CDD" id="cd07304">
    <property type="entry name" value="Chorismate_synthase"/>
    <property type="match status" value="1"/>
</dbReference>
<dbReference type="FunFam" id="3.60.150.10:FF:000003">
    <property type="entry name" value="Chorismate synthase"/>
    <property type="match status" value="1"/>
</dbReference>
<dbReference type="Gene3D" id="3.60.150.10">
    <property type="entry name" value="Chorismate synthase AroC"/>
    <property type="match status" value="1"/>
</dbReference>
<dbReference type="HAMAP" id="MF_00300">
    <property type="entry name" value="Chorismate_synth"/>
    <property type="match status" value="1"/>
</dbReference>
<dbReference type="InterPro" id="IPR000453">
    <property type="entry name" value="Chorismate_synth"/>
</dbReference>
<dbReference type="InterPro" id="IPR035904">
    <property type="entry name" value="Chorismate_synth_AroC_sf"/>
</dbReference>
<dbReference type="InterPro" id="IPR020541">
    <property type="entry name" value="Chorismate_synthase_CS"/>
</dbReference>
<dbReference type="NCBIfam" id="TIGR00033">
    <property type="entry name" value="aroC"/>
    <property type="match status" value="1"/>
</dbReference>
<dbReference type="NCBIfam" id="NF003793">
    <property type="entry name" value="PRK05382.1"/>
    <property type="match status" value="1"/>
</dbReference>
<dbReference type="PANTHER" id="PTHR21085">
    <property type="entry name" value="CHORISMATE SYNTHASE"/>
    <property type="match status" value="1"/>
</dbReference>
<dbReference type="PANTHER" id="PTHR21085:SF0">
    <property type="entry name" value="CHORISMATE SYNTHASE"/>
    <property type="match status" value="1"/>
</dbReference>
<dbReference type="Pfam" id="PF01264">
    <property type="entry name" value="Chorismate_synt"/>
    <property type="match status" value="1"/>
</dbReference>
<dbReference type="PIRSF" id="PIRSF001456">
    <property type="entry name" value="Chorismate_synth"/>
    <property type="match status" value="1"/>
</dbReference>
<dbReference type="SUPFAM" id="SSF103263">
    <property type="entry name" value="Chorismate synthase, AroC"/>
    <property type="match status" value="1"/>
</dbReference>
<dbReference type="PROSITE" id="PS00787">
    <property type="entry name" value="CHORISMATE_SYNTHASE_1"/>
    <property type="match status" value="1"/>
</dbReference>
<dbReference type="PROSITE" id="PS00788">
    <property type="entry name" value="CHORISMATE_SYNTHASE_2"/>
    <property type="match status" value="1"/>
</dbReference>
<dbReference type="PROSITE" id="PS00789">
    <property type="entry name" value="CHORISMATE_SYNTHASE_3"/>
    <property type="match status" value="1"/>
</dbReference>
<reference key="1">
    <citation type="journal article" date="2002" name="Genome Res.">
        <title>The genome of Methanosarcina acetivorans reveals extensive metabolic and physiological diversity.</title>
        <authorList>
            <person name="Galagan J.E."/>
            <person name="Nusbaum C."/>
            <person name="Roy A."/>
            <person name="Endrizzi M.G."/>
            <person name="Macdonald P."/>
            <person name="FitzHugh W."/>
            <person name="Calvo S."/>
            <person name="Engels R."/>
            <person name="Smirnov S."/>
            <person name="Atnoor D."/>
            <person name="Brown A."/>
            <person name="Allen N."/>
            <person name="Naylor J."/>
            <person name="Stange-Thomann N."/>
            <person name="DeArellano K."/>
            <person name="Johnson R."/>
            <person name="Linton L."/>
            <person name="McEwan P."/>
            <person name="McKernan K."/>
            <person name="Talamas J."/>
            <person name="Tirrell A."/>
            <person name="Ye W."/>
            <person name="Zimmer A."/>
            <person name="Barber R.D."/>
            <person name="Cann I."/>
            <person name="Graham D.E."/>
            <person name="Grahame D.A."/>
            <person name="Guss A.M."/>
            <person name="Hedderich R."/>
            <person name="Ingram-Smith C."/>
            <person name="Kuettner H.C."/>
            <person name="Krzycki J.A."/>
            <person name="Leigh J.A."/>
            <person name="Li W."/>
            <person name="Liu J."/>
            <person name="Mukhopadhyay B."/>
            <person name="Reeve J.N."/>
            <person name="Smith K."/>
            <person name="Springer T.A."/>
            <person name="Umayam L.A."/>
            <person name="White O."/>
            <person name="White R.H."/>
            <person name="de Macario E.C."/>
            <person name="Ferry J.G."/>
            <person name="Jarrell K.F."/>
            <person name="Jing H."/>
            <person name="Macario A.J.L."/>
            <person name="Paulsen I.T."/>
            <person name="Pritchett M."/>
            <person name="Sowers K.R."/>
            <person name="Swanson R.V."/>
            <person name="Zinder S.H."/>
            <person name="Lander E."/>
            <person name="Metcalf W.W."/>
            <person name="Birren B."/>
        </authorList>
    </citation>
    <scope>NUCLEOTIDE SEQUENCE [LARGE SCALE GENOMIC DNA]</scope>
    <source>
        <strain>ATCC 35395 / DSM 2834 / JCM 12185 / C2A</strain>
    </source>
</reference>
<organism>
    <name type="scientific">Methanosarcina acetivorans (strain ATCC 35395 / DSM 2834 / JCM 12185 / C2A)</name>
    <dbReference type="NCBI Taxonomy" id="188937"/>
    <lineage>
        <taxon>Archaea</taxon>
        <taxon>Methanobacteriati</taxon>
        <taxon>Methanobacteriota</taxon>
        <taxon>Stenosarchaea group</taxon>
        <taxon>Methanomicrobia</taxon>
        <taxon>Methanosarcinales</taxon>
        <taxon>Methanosarcinaceae</taxon>
        <taxon>Methanosarcina</taxon>
    </lineage>
</organism>
<comment type="function">
    <text evidence="1">Catalyzes the anti-1,4-elimination of the C-3 phosphate and the C-6 proR hydrogen from 5-enolpyruvylshikimate-3-phosphate (EPSP) to yield chorismate, which is the branch point compound that serves as the starting substrate for the three terminal pathways of aromatic amino acid biosynthesis. This reaction introduces a second double bond into the aromatic ring system.</text>
</comment>
<comment type="catalytic activity">
    <reaction evidence="1">
        <text>5-O-(1-carboxyvinyl)-3-phosphoshikimate = chorismate + phosphate</text>
        <dbReference type="Rhea" id="RHEA:21020"/>
        <dbReference type="ChEBI" id="CHEBI:29748"/>
        <dbReference type="ChEBI" id="CHEBI:43474"/>
        <dbReference type="ChEBI" id="CHEBI:57701"/>
        <dbReference type="EC" id="4.2.3.5"/>
    </reaction>
</comment>
<comment type="cofactor">
    <cofactor evidence="1">
        <name>FMNH2</name>
        <dbReference type="ChEBI" id="CHEBI:57618"/>
    </cofactor>
    <text evidence="1">Reduced FMN (FMNH(2)).</text>
</comment>
<comment type="pathway">
    <text evidence="1">Metabolic intermediate biosynthesis; chorismate biosynthesis; chorismate from D-erythrose 4-phosphate and phosphoenolpyruvate: step 7/7.</text>
</comment>
<comment type="similarity">
    <text evidence="1">Belongs to the chorismate synthase family.</text>
</comment>
<sequence length="365" mass="39202">MAGNIFGQMFRIATWGESHGRAVGVVVDGLPAGLPFSEADIQKELDRRRPGQSEVSTPRSEADRVEILSGIFEGMSTGTPISMLVWNSDARSSSYDVIKNTPRPGHADFSYMARYGIRDHRGGGRSSARETIGRVAGGALAKLLLSRYGVRIAGHVLELGGIRAKPLSFEEILENVEKTPVRCADLEAAEKMLEKVATLRQEGDSVGGIVELIVKGVPAGLGEPVFDRLDADLSKALMSIPAVKGFEIGAGFEAARMRGSEMNDPFRMEQGEITCSKNNAGGILGGISTGLDIICRAAVKPTPSIGKVQQTVDLTTRENTEISIRGRHDPTIPPRMVPVAEAMVALVLSDHMLRSGFINPRTLLE</sequence>
<proteinExistence type="inferred from homology"/>
<evidence type="ECO:0000255" key="1">
    <source>
        <dbReference type="HAMAP-Rule" id="MF_00300"/>
    </source>
</evidence>
<evidence type="ECO:0000256" key="2">
    <source>
        <dbReference type="SAM" id="MobiDB-lite"/>
    </source>
</evidence>
<feature type="chain" id="PRO_0000140689" description="Chorismate synthase">
    <location>
        <begin position="1"/>
        <end position="365"/>
    </location>
</feature>
<feature type="region of interest" description="Disordered" evidence="2">
    <location>
        <begin position="41"/>
        <end position="62"/>
    </location>
</feature>
<feature type="compositionally biased region" description="Basic and acidic residues" evidence="2">
    <location>
        <begin position="41"/>
        <end position="51"/>
    </location>
</feature>
<feature type="binding site" evidence="1">
    <location>
        <position position="48"/>
    </location>
    <ligand>
        <name>NADP(+)</name>
        <dbReference type="ChEBI" id="CHEBI:58349"/>
    </ligand>
</feature>
<feature type="binding site" evidence="1">
    <location>
        <begin position="125"/>
        <end position="127"/>
    </location>
    <ligand>
        <name>FMN</name>
        <dbReference type="ChEBI" id="CHEBI:58210"/>
    </ligand>
</feature>
<feature type="binding site" evidence="1">
    <location>
        <position position="285"/>
    </location>
    <ligand>
        <name>FMN</name>
        <dbReference type="ChEBI" id="CHEBI:58210"/>
    </ligand>
</feature>
<feature type="binding site" evidence="1">
    <location>
        <begin position="300"/>
        <end position="304"/>
    </location>
    <ligand>
        <name>FMN</name>
        <dbReference type="ChEBI" id="CHEBI:58210"/>
    </ligand>
</feature>
<feature type="binding site" evidence="1">
    <location>
        <position position="327"/>
    </location>
    <ligand>
        <name>FMN</name>
        <dbReference type="ChEBI" id="CHEBI:58210"/>
    </ligand>
</feature>
<protein>
    <recommendedName>
        <fullName evidence="1">Chorismate synthase</fullName>
        <shortName evidence="1">CS</shortName>
        <ecNumber evidence="1">4.2.3.5</ecNumber>
    </recommendedName>
    <alternativeName>
        <fullName evidence="1">5-enolpyruvylshikimate-3-phosphate phospholyase</fullName>
    </alternativeName>
</protein>